<sequence length="667" mass="74091">MDPSRSRSGGSGEESSFQENERRWQQERLHREEAYYQFINELSDEDYRLMRDHNLLGTPGEITSEELQQRLERAKEQLASQPGSDSAASDGDSESLRAHSDEDSLLRWLNTFRRTGNVTRSGQNGNQSWRAVSRTNPNSGEFGFSLEIHINPDNRGSEMHGEDSTDIPLSGVNREHRQQRPSSPVARRTRSQTSMSSSGPRGRRGARRQGSVQGSFATLGRLRNGIGVALGVPRVSAPRTNVINSHTNQSDGSTLRQGGRQRFGAAHIWENGARSNVTVRNTNQRLEPIRLRPAFSSRSRSPIQRQNGTVHHNSQRQGRPVQQTGRNRSVRHRGVTRVFLEQGREHRGTDYTPLSNSRLVSRITVEEGESSRSSAATQRHPAITLDLQVRRIRPGETRDRDSIANRTRSRAGLAESTVESTSGGFHRTISHLERSGVRTYVSTITVPLRRISENDVVEPSSVALRSILRQIMTGFGELSSLMEVEPASENQSNGQRLPEVYLELSNGDAADDSGQHGRASSQASQAQDGAEMLAVREPAPPQARPSGSRSRRQLGRADSVVEAGTLPILRLAHFFLLNEGDDDPIRGLTKEQIDNLSTRSYEQDGVDSELGKVCSVCISDYVAGNKLRQLPCLHEFHIHCIDRWLSENCTCPVCRRPVLEFGATSSG</sequence>
<proteinExistence type="evidence at protein level"/>
<keyword id="KW-0966">Cell projection</keyword>
<keyword id="KW-0963">Cytoplasm</keyword>
<keyword id="KW-0479">Metal-binding</keyword>
<keyword id="KW-0539">Nucleus</keyword>
<keyword id="KW-0597">Phosphoprotein</keyword>
<keyword id="KW-1185">Reference proteome</keyword>
<keyword id="KW-0808">Transferase</keyword>
<keyword id="KW-0833">Ubl conjugation pathway</keyword>
<keyword id="KW-0862">Zinc</keyword>
<keyword id="KW-0863">Zinc-finger</keyword>
<accession>Q9DBU5</accession>
<accession>B2RRR0</accession>
<accession>Q8K565</accession>
<feature type="chain" id="PRO_0000395751" description="E3 ubiquitin-protein ligase RNF6">
    <location>
        <begin position="1"/>
        <end position="667"/>
    </location>
</feature>
<feature type="zinc finger region" description="RING-type; atypical" evidence="2">
    <location>
        <begin position="614"/>
        <end position="655"/>
    </location>
</feature>
<feature type="region of interest" description="Disordered" evidence="3">
    <location>
        <begin position="1"/>
        <end position="25"/>
    </location>
</feature>
<feature type="region of interest" description="Disordered" evidence="3">
    <location>
        <begin position="75"/>
        <end position="100"/>
    </location>
</feature>
<feature type="region of interest" description="Disordered" evidence="3">
    <location>
        <begin position="116"/>
        <end position="216"/>
    </location>
</feature>
<feature type="region of interest" description="Disordered" evidence="3">
    <location>
        <begin position="295"/>
        <end position="355"/>
    </location>
</feature>
<feature type="region of interest" description="Disordered" evidence="3">
    <location>
        <begin position="396"/>
        <end position="419"/>
    </location>
</feature>
<feature type="region of interest" description="Disordered" evidence="3">
    <location>
        <begin position="507"/>
        <end position="532"/>
    </location>
</feature>
<feature type="region of interest" description="Disordered" evidence="3">
    <location>
        <begin position="537"/>
        <end position="556"/>
    </location>
</feature>
<feature type="compositionally biased region" description="Low complexity" evidence="3">
    <location>
        <begin position="79"/>
        <end position="90"/>
    </location>
</feature>
<feature type="compositionally biased region" description="Polar residues" evidence="3">
    <location>
        <begin position="116"/>
        <end position="139"/>
    </location>
</feature>
<feature type="compositionally biased region" description="Basic and acidic residues" evidence="3">
    <location>
        <begin position="150"/>
        <end position="163"/>
    </location>
</feature>
<feature type="compositionally biased region" description="Low complexity" evidence="3">
    <location>
        <begin position="191"/>
        <end position="200"/>
    </location>
</feature>
<feature type="compositionally biased region" description="Polar residues" evidence="3">
    <location>
        <begin position="296"/>
        <end position="327"/>
    </location>
</feature>
<feature type="compositionally biased region" description="Low complexity" evidence="3">
    <location>
        <begin position="516"/>
        <end position="530"/>
    </location>
</feature>
<feature type="modified residue" description="Phosphoserine" evidence="10 11">
    <location>
        <position position="559"/>
    </location>
</feature>
<feature type="sequence conflict" description="In Ref. 1; AAK84435 and 3; EDL05801/EDL05802." evidence="8" ref="1 3">
    <original>P</original>
    <variation>L</variation>
    <location>
        <position position="3"/>
    </location>
</feature>
<feature type="sequence conflict" description="In Ref. 1; AAK84435, 3; EDL05801/EDL05802 and 4; AAI38546." evidence="8" ref="1 3 4">
    <original>H</original>
    <variation>R</variation>
    <location>
        <position position="346"/>
    </location>
</feature>
<organism>
    <name type="scientific">Mus musculus</name>
    <name type="common">Mouse</name>
    <dbReference type="NCBI Taxonomy" id="10090"/>
    <lineage>
        <taxon>Eukaryota</taxon>
        <taxon>Metazoa</taxon>
        <taxon>Chordata</taxon>
        <taxon>Craniata</taxon>
        <taxon>Vertebrata</taxon>
        <taxon>Euteleostomi</taxon>
        <taxon>Mammalia</taxon>
        <taxon>Eutheria</taxon>
        <taxon>Euarchontoglires</taxon>
        <taxon>Glires</taxon>
        <taxon>Rodentia</taxon>
        <taxon>Myomorpha</taxon>
        <taxon>Muroidea</taxon>
        <taxon>Muridae</taxon>
        <taxon>Murinae</taxon>
        <taxon>Mus</taxon>
        <taxon>Mus</taxon>
    </lineage>
</organism>
<comment type="function">
    <text evidence="1 4 5 6">E3 ubiquitin-protein ligase mediating 'Lys-48'-linked polyubiquitination of LIMK1 and its subsequent targeting to the proteasome for degradation (PubMed:16204183). Negatively regulates axonal outgrowth through regulation of the LIMK1 turnover (PubMed:16204183). Mediates 'Lys-6' and 'Lys-27'-linked polyubiquitination of AR/androgen receptor thereby modulating its transcriptional activity (By similarity). May also bind DNA and function as a transcriptional regulator (PubMed:11971979). Mediates polyubiquitination of QKI in macrophages, leading to its degradation (PubMed:36088389).</text>
</comment>
<comment type="catalytic activity">
    <reaction evidence="5 6">
        <text>S-ubiquitinyl-[E2 ubiquitin-conjugating enzyme]-L-cysteine + [acceptor protein]-L-lysine = [E2 ubiquitin-conjugating enzyme]-L-cysteine + N(6)-ubiquitinyl-[acceptor protein]-L-lysine.</text>
        <dbReference type="EC" id="2.3.2.27"/>
    </reaction>
</comment>
<comment type="pathway">
    <text evidence="5 6">Protein modification; protein ubiquitination.</text>
</comment>
<comment type="subcellular location">
    <subcellularLocation>
        <location evidence="4">Nucleus</location>
    </subcellularLocation>
    <subcellularLocation>
        <location evidence="5">Cytoplasm</location>
    </subcellularLocation>
    <subcellularLocation>
        <location evidence="5">Cell projection</location>
        <location evidence="5">Axon</location>
    </subcellularLocation>
    <subcellularLocation>
        <location evidence="4">Nucleus</location>
        <location evidence="4">PML body</location>
    </subcellularLocation>
    <text evidence="4">Localizes to the PML nuclear bodies in Sertoli cells.</text>
</comment>
<comment type="tissue specificity">
    <text evidence="4">Widely expressed with higher expression in the testis in both germ cells and Sertoli cells.</text>
</comment>
<comment type="developmental stage">
    <text evidence="5">Expressed in the floor plate and ventral portions of the developing neural tube of 12.5 dpc to 13 dpc mouse embryos. Found in developing neuronal projections (at protein level).</text>
</comment>
<comment type="similarity">
    <text evidence="8">Belongs to the RNF12 family.</text>
</comment>
<dbReference type="EC" id="2.3.2.27" evidence="5 6"/>
<dbReference type="EMBL" id="AY039004">
    <property type="protein sequence ID" value="AAK84435.1"/>
    <property type="molecule type" value="mRNA"/>
</dbReference>
<dbReference type="EMBL" id="AK004745">
    <property type="protein sequence ID" value="BAB23526.1"/>
    <property type="molecule type" value="mRNA"/>
</dbReference>
<dbReference type="EMBL" id="AK150269">
    <property type="protein sequence ID" value="BAE29425.1"/>
    <property type="molecule type" value="mRNA"/>
</dbReference>
<dbReference type="EMBL" id="AK152106">
    <property type="protein sequence ID" value="BAE30953.1"/>
    <property type="molecule type" value="mRNA"/>
</dbReference>
<dbReference type="EMBL" id="CH466614">
    <property type="protein sequence ID" value="EDL05801.1"/>
    <property type="molecule type" value="Genomic_DNA"/>
</dbReference>
<dbReference type="EMBL" id="CH466614">
    <property type="protein sequence ID" value="EDL05802.1"/>
    <property type="molecule type" value="Genomic_DNA"/>
</dbReference>
<dbReference type="EMBL" id="BC138545">
    <property type="protein sequence ID" value="AAI38546.1"/>
    <property type="molecule type" value="mRNA"/>
</dbReference>
<dbReference type="CCDS" id="CCDS19868.1"/>
<dbReference type="RefSeq" id="NP_001243014.1">
    <property type="nucleotide sequence ID" value="NM_001256085.1"/>
</dbReference>
<dbReference type="RefSeq" id="NP_001243016.1">
    <property type="nucleotide sequence ID" value="NM_001256087.1"/>
</dbReference>
<dbReference type="RefSeq" id="NP_083050.1">
    <property type="nucleotide sequence ID" value="NM_028774.3"/>
</dbReference>
<dbReference type="SMR" id="Q9DBU5"/>
<dbReference type="BioGRID" id="216515">
    <property type="interactions" value="3"/>
</dbReference>
<dbReference type="FunCoup" id="Q9DBU5">
    <property type="interactions" value="4118"/>
</dbReference>
<dbReference type="IntAct" id="Q9DBU5">
    <property type="interactions" value="2"/>
</dbReference>
<dbReference type="MINT" id="Q9DBU5"/>
<dbReference type="STRING" id="10090.ENSMUSP00000124293"/>
<dbReference type="iPTMnet" id="Q9DBU5"/>
<dbReference type="PhosphoSitePlus" id="Q9DBU5"/>
<dbReference type="jPOST" id="Q9DBU5"/>
<dbReference type="PaxDb" id="10090-ENSMUSP00000124293"/>
<dbReference type="ProteomicsDB" id="301628"/>
<dbReference type="Pumba" id="Q9DBU5"/>
<dbReference type="Antibodypedia" id="35204">
    <property type="antibodies" value="247 antibodies from 30 providers"/>
</dbReference>
<dbReference type="DNASU" id="74132"/>
<dbReference type="Ensembl" id="ENSMUST00000067837.10">
    <property type="protein sequence ID" value="ENSMUSP00000067559.4"/>
    <property type="gene ID" value="ENSMUSG00000029634.16"/>
</dbReference>
<dbReference type="Ensembl" id="ENSMUST00000161859.8">
    <property type="protein sequence ID" value="ENSMUSP00000124293.2"/>
    <property type="gene ID" value="ENSMUSG00000029634.16"/>
</dbReference>
<dbReference type="Ensembl" id="ENSMUST00000169407.9">
    <property type="protein sequence ID" value="ENSMUSP00000128774.3"/>
    <property type="gene ID" value="ENSMUSG00000029634.16"/>
</dbReference>
<dbReference type="GeneID" id="74132"/>
<dbReference type="KEGG" id="mmu:74132"/>
<dbReference type="UCSC" id="uc009anb.2">
    <property type="organism name" value="mouse"/>
</dbReference>
<dbReference type="AGR" id="MGI:1921382"/>
<dbReference type="CTD" id="6049"/>
<dbReference type="MGI" id="MGI:1921382">
    <property type="gene designation" value="Rnf6"/>
</dbReference>
<dbReference type="VEuPathDB" id="HostDB:ENSMUSG00000029634"/>
<dbReference type="eggNOG" id="KOG0800">
    <property type="taxonomic scope" value="Eukaryota"/>
</dbReference>
<dbReference type="GeneTree" id="ENSGT00940000158530"/>
<dbReference type="HOGENOM" id="CLU_025933_0_0_1"/>
<dbReference type="InParanoid" id="Q9DBU5"/>
<dbReference type="OMA" id="DISRDHT"/>
<dbReference type="OrthoDB" id="8062037at2759"/>
<dbReference type="PhylomeDB" id="Q9DBU5"/>
<dbReference type="TreeFam" id="TF325756"/>
<dbReference type="Reactome" id="R-MMU-983168">
    <property type="pathway name" value="Antigen processing: Ubiquitination &amp; Proteasome degradation"/>
</dbReference>
<dbReference type="UniPathway" id="UPA00143"/>
<dbReference type="BioGRID-ORCS" id="74132">
    <property type="hits" value="1 hit in 77 CRISPR screens"/>
</dbReference>
<dbReference type="ChiTaRS" id="Rnf6">
    <property type="organism name" value="mouse"/>
</dbReference>
<dbReference type="PRO" id="PR:Q9DBU5"/>
<dbReference type="Proteomes" id="UP000000589">
    <property type="component" value="Chromosome 5"/>
</dbReference>
<dbReference type="RNAct" id="Q9DBU5">
    <property type="molecule type" value="protein"/>
</dbReference>
<dbReference type="Bgee" id="ENSMUSG00000029634">
    <property type="expression patterns" value="Expressed in lacrimal gland and 257 other cell types or tissues"/>
</dbReference>
<dbReference type="ExpressionAtlas" id="Q9DBU5">
    <property type="expression patterns" value="baseline and differential"/>
</dbReference>
<dbReference type="GO" id="GO:0030424">
    <property type="term" value="C:axon"/>
    <property type="evidence" value="ECO:0000314"/>
    <property type="project" value="MGI"/>
</dbReference>
<dbReference type="GO" id="GO:0005737">
    <property type="term" value="C:cytoplasm"/>
    <property type="evidence" value="ECO:0000314"/>
    <property type="project" value="MGI"/>
</dbReference>
<dbReference type="GO" id="GO:0031965">
    <property type="term" value="C:nuclear membrane"/>
    <property type="evidence" value="ECO:0007669"/>
    <property type="project" value="Ensembl"/>
</dbReference>
<dbReference type="GO" id="GO:0005634">
    <property type="term" value="C:nucleus"/>
    <property type="evidence" value="ECO:0000250"/>
    <property type="project" value="UniProtKB"/>
</dbReference>
<dbReference type="GO" id="GO:0016605">
    <property type="term" value="C:PML body"/>
    <property type="evidence" value="ECO:0000314"/>
    <property type="project" value="MGI"/>
</dbReference>
<dbReference type="GO" id="GO:0003677">
    <property type="term" value="F:DNA binding"/>
    <property type="evidence" value="ECO:0000314"/>
    <property type="project" value="MGI"/>
</dbReference>
<dbReference type="GO" id="GO:0050681">
    <property type="term" value="F:nuclear androgen receptor binding"/>
    <property type="evidence" value="ECO:0000250"/>
    <property type="project" value="UniProtKB"/>
</dbReference>
<dbReference type="GO" id="GO:0061630">
    <property type="term" value="F:ubiquitin protein ligase activity"/>
    <property type="evidence" value="ECO:0000314"/>
    <property type="project" value="UniProtKB"/>
</dbReference>
<dbReference type="GO" id="GO:0008270">
    <property type="term" value="F:zinc ion binding"/>
    <property type="evidence" value="ECO:0007669"/>
    <property type="project" value="UniProtKB-KW"/>
</dbReference>
<dbReference type="GO" id="GO:0048675">
    <property type="term" value="P:axon extension"/>
    <property type="evidence" value="ECO:0000315"/>
    <property type="project" value="MGI"/>
</dbReference>
<dbReference type="GO" id="GO:0030517">
    <property type="term" value="P:negative regulation of axon extension"/>
    <property type="evidence" value="ECO:0000315"/>
    <property type="project" value="MGI"/>
</dbReference>
<dbReference type="GO" id="GO:0045893">
    <property type="term" value="P:positive regulation of DNA-templated transcription"/>
    <property type="evidence" value="ECO:0000314"/>
    <property type="project" value="MGI"/>
</dbReference>
<dbReference type="GO" id="GO:0044314">
    <property type="term" value="P:protein K27-linked ubiquitination"/>
    <property type="evidence" value="ECO:0000250"/>
    <property type="project" value="UniProtKB"/>
</dbReference>
<dbReference type="GO" id="GO:0070936">
    <property type="term" value="P:protein K48-linked ubiquitination"/>
    <property type="evidence" value="ECO:0000315"/>
    <property type="project" value="UniProtKB"/>
</dbReference>
<dbReference type="GO" id="GO:0085020">
    <property type="term" value="P:protein K6-linked ubiquitination"/>
    <property type="evidence" value="ECO:0000250"/>
    <property type="project" value="UniProtKB"/>
</dbReference>
<dbReference type="GO" id="GO:0060765">
    <property type="term" value="P:regulation of androgen receptor signaling pathway"/>
    <property type="evidence" value="ECO:0000250"/>
    <property type="project" value="UniProtKB"/>
</dbReference>
<dbReference type="GO" id="GO:0006355">
    <property type="term" value="P:regulation of DNA-templated transcription"/>
    <property type="evidence" value="ECO:0000250"/>
    <property type="project" value="UniProtKB"/>
</dbReference>
<dbReference type="GO" id="GO:0006511">
    <property type="term" value="P:ubiquitin-dependent protein catabolic process"/>
    <property type="evidence" value="ECO:0000314"/>
    <property type="project" value="UniProtKB"/>
</dbReference>
<dbReference type="FunFam" id="3.30.40.10:FF:000054">
    <property type="entry name" value="E3 ubiquitin-protein ligase RLIM isoform X1"/>
    <property type="match status" value="1"/>
</dbReference>
<dbReference type="Gene3D" id="3.30.40.10">
    <property type="entry name" value="Zinc/RING finger domain, C3HC4 (zinc finger)"/>
    <property type="match status" value="1"/>
</dbReference>
<dbReference type="InterPro" id="IPR051834">
    <property type="entry name" value="RING_finger_E3_ligase"/>
</dbReference>
<dbReference type="InterPro" id="IPR001841">
    <property type="entry name" value="Znf_RING"/>
</dbReference>
<dbReference type="InterPro" id="IPR013083">
    <property type="entry name" value="Znf_RING/FYVE/PHD"/>
</dbReference>
<dbReference type="PANTHER" id="PTHR45931:SF2">
    <property type="entry name" value="E3 UBIQUITIN-PROTEIN LIGASE RNF6"/>
    <property type="match status" value="1"/>
</dbReference>
<dbReference type="PANTHER" id="PTHR45931">
    <property type="entry name" value="SI:CH211-59O9.10"/>
    <property type="match status" value="1"/>
</dbReference>
<dbReference type="Pfam" id="PF13639">
    <property type="entry name" value="zf-RING_2"/>
    <property type="match status" value="1"/>
</dbReference>
<dbReference type="SMART" id="SM00184">
    <property type="entry name" value="RING"/>
    <property type="match status" value="1"/>
</dbReference>
<dbReference type="SUPFAM" id="SSF57850">
    <property type="entry name" value="RING/U-box"/>
    <property type="match status" value="1"/>
</dbReference>
<dbReference type="PROSITE" id="PS50089">
    <property type="entry name" value="ZF_RING_2"/>
    <property type="match status" value="1"/>
</dbReference>
<protein>
    <recommendedName>
        <fullName>E3 ubiquitin-protein ligase RNF6</fullName>
        <ecNumber evidence="5 6">2.3.2.27</ecNumber>
    </recommendedName>
    <alternativeName>
        <fullName>RLIM-like protein</fullName>
    </alternativeName>
</protein>
<reference key="1">
    <citation type="journal article" date="2002" name="Mol. Cell. Biol.">
        <title>Gene control in germinal differentiation: RNF6, a transcription regulatory protein in the mouse sertoli cell.</title>
        <authorList>
            <person name="Lopez P."/>
            <person name="Vidal F."/>
            <person name="Martin L."/>
            <person name="Lopez-Fernandez L.A."/>
            <person name="Rual J.F."/>
            <person name="Rosen B.S."/>
            <person name="Cuzin F."/>
            <person name="Rassoulzadegan M."/>
        </authorList>
    </citation>
    <scope>NUCLEOTIDE SEQUENCE [MRNA]</scope>
    <scope>FUNCTION</scope>
    <scope>SUBCELLULAR LOCATION</scope>
    <scope>TISSUE SPECIFICITY</scope>
    <source>
        <strain>C57BL/6 X DBA/2</strain>
        <tissue>Testis</tissue>
    </source>
</reference>
<reference key="2">
    <citation type="journal article" date="2005" name="Science">
        <title>The transcriptional landscape of the mammalian genome.</title>
        <authorList>
            <person name="Carninci P."/>
            <person name="Kasukawa T."/>
            <person name="Katayama S."/>
            <person name="Gough J."/>
            <person name="Frith M.C."/>
            <person name="Maeda N."/>
            <person name="Oyama R."/>
            <person name="Ravasi T."/>
            <person name="Lenhard B."/>
            <person name="Wells C."/>
            <person name="Kodzius R."/>
            <person name="Shimokawa K."/>
            <person name="Bajic V.B."/>
            <person name="Brenner S.E."/>
            <person name="Batalov S."/>
            <person name="Forrest A.R."/>
            <person name="Zavolan M."/>
            <person name="Davis M.J."/>
            <person name="Wilming L.G."/>
            <person name="Aidinis V."/>
            <person name="Allen J.E."/>
            <person name="Ambesi-Impiombato A."/>
            <person name="Apweiler R."/>
            <person name="Aturaliya R.N."/>
            <person name="Bailey T.L."/>
            <person name="Bansal M."/>
            <person name="Baxter L."/>
            <person name="Beisel K.W."/>
            <person name="Bersano T."/>
            <person name="Bono H."/>
            <person name="Chalk A.M."/>
            <person name="Chiu K.P."/>
            <person name="Choudhary V."/>
            <person name="Christoffels A."/>
            <person name="Clutterbuck D.R."/>
            <person name="Crowe M.L."/>
            <person name="Dalla E."/>
            <person name="Dalrymple B.P."/>
            <person name="de Bono B."/>
            <person name="Della Gatta G."/>
            <person name="di Bernardo D."/>
            <person name="Down T."/>
            <person name="Engstrom P."/>
            <person name="Fagiolini M."/>
            <person name="Faulkner G."/>
            <person name="Fletcher C.F."/>
            <person name="Fukushima T."/>
            <person name="Furuno M."/>
            <person name="Futaki S."/>
            <person name="Gariboldi M."/>
            <person name="Georgii-Hemming P."/>
            <person name="Gingeras T.R."/>
            <person name="Gojobori T."/>
            <person name="Green R.E."/>
            <person name="Gustincich S."/>
            <person name="Harbers M."/>
            <person name="Hayashi Y."/>
            <person name="Hensch T.K."/>
            <person name="Hirokawa N."/>
            <person name="Hill D."/>
            <person name="Huminiecki L."/>
            <person name="Iacono M."/>
            <person name="Ikeo K."/>
            <person name="Iwama A."/>
            <person name="Ishikawa T."/>
            <person name="Jakt M."/>
            <person name="Kanapin A."/>
            <person name="Katoh M."/>
            <person name="Kawasawa Y."/>
            <person name="Kelso J."/>
            <person name="Kitamura H."/>
            <person name="Kitano H."/>
            <person name="Kollias G."/>
            <person name="Krishnan S.P."/>
            <person name="Kruger A."/>
            <person name="Kummerfeld S.K."/>
            <person name="Kurochkin I.V."/>
            <person name="Lareau L.F."/>
            <person name="Lazarevic D."/>
            <person name="Lipovich L."/>
            <person name="Liu J."/>
            <person name="Liuni S."/>
            <person name="McWilliam S."/>
            <person name="Madan Babu M."/>
            <person name="Madera M."/>
            <person name="Marchionni L."/>
            <person name="Matsuda H."/>
            <person name="Matsuzawa S."/>
            <person name="Miki H."/>
            <person name="Mignone F."/>
            <person name="Miyake S."/>
            <person name="Morris K."/>
            <person name="Mottagui-Tabar S."/>
            <person name="Mulder N."/>
            <person name="Nakano N."/>
            <person name="Nakauchi H."/>
            <person name="Ng P."/>
            <person name="Nilsson R."/>
            <person name="Nishiguchi S."/>
            <person name="Nishikawa S."/>
            <person name="Nori F."/>
            <person name="Ohara O."/>
            <person name="Okazaki Y."/>
            <person name="Orlando V."/>
            <person name="Pang K.C."/>
            <person name="Pavan W.J."/>
            <person name="Pavesi G."/>
            <person name="Pesole G."/>
            <person name="Petrovsky N."/>
            <person name="Piazza S."/>
            <person name="Reed J."/>
            <person name="Reid J.F."/>
            <person name="Ring B.Z."/>
            <person name="Ringwald M."/>
            <person name="Rost B."/>
            <person name="Ruan Y."/>
            <person name="Salzberg S.L."/>
            <person name="Sandelin A."/>
            <person name="Schneider C."/>
            <person name="Schoenbach C."/>
            <person name="Sekiguchi K."/>
            <person name="Semple C.A."/>
            <person name="Seno S."/>
            <person name="Sessa L."/>
            <person name="Sheng Y."/>
            <person name="Shibata Y."/>
            <person name="Shimada H."/>
            <person name="Shimada K."/>
            <person name="Silva D."/>
            <person name="Sinclair B."/>
            <person name="Sperling S."/>
            <person name="Stupka E."/>
            <person name="Sugiura K."/>
            <person name="Sultana R."/>
            <person name="Takenaka Y."/>
            <person name="Taki K."/>
            <person name="Tammoja K."/>
            <person name="Tan S.L."/>
            <person name="Tang S."/>
            <person name="Taylor M.S."/>
            <person name="Tegner J."/>
            <person name="Teichmann S.A."/>
            <person name="Ueda H.R."/>
            <person name="van Nimwegen E."/>
            <person name="Verardo R."/>
            <person name="Wei C.L."/>
            <person name="Yagi K."/>
            <person name="Yamanishi H."/>
            <person name="Zabarovsky E."/>
            <person name="Zhu S."/>
            <person name="Zimmer A."/>
            <person name="Hide W."/>
            <person name="Bult C."/>
            <person name="Grimmond S.M."/>
            <person name="Teasdale R.D."/>
            <person name="Liu E.T."/>
            <person name="Brusic V."/>
            <person name="Quackenbush J."/>
            <person name="Wahlestedt C."/>
            <person name="Mattick J.S."/>
            <person name="Hume D.A."/>
            <person name="Kai C."/>
            <person name="Sasaki D."/>
            <person name="Tomaru Y."/>
            <person name="Fukuda S."/>
            <person name="Kanamori-Katayama M."/>
            <person name="Suzuki M."/>
            <person name="Aoki J."/>
            <person name="Arakawa T."/>
            <person name="Iida J."/>
            <person name="Imamura K."/>
            <person name="Itoh M."/>
            <person name="Kato T."/>
            <person name="Kawaji H."/>
            <person name="Kawagashira N."/>
            <person name="Kawashima T."/>
            <person name="Kojima M."/>
            <person name="Kondo S."/>
            <person name="Konno H."/>
            <person name="Nakano K."/>
            <person name="Ninomiya N."/>
            <person name="Nishio T."/>
            <person name="Okada M."/>
            <person name="Plessy C."/>
            <person name="Shibata K."/>
            <person name="Shiraki T."/>
            <person name="Suzuki S."/>
            <person name="Tagami M."/>
            <person name="Waki K."/>
            <person name="Watahiki A."/>
            <person name="Okamura-Oho Y."/>
            <person name="Suzuki H."/>
            <person name="Kawai J."/>
            <person name="Hayashizaki Y."/>
        </authorList>
    </citation>
    <scope>NUCLEOTIDE SEQUENCE [LARGE SCALE MRNA]</scope>
    <source>
        <strain>C57BL/6J</strain>
        <tissue>Bone marrow</tissue>
        <tissue>Lung</tissue>
    </source>
</reference>
<reference key="3">
    <citation type="submission" date="2005-07" db="EMBL/GenBank/DDBJ databases">
        <authorList>
            <person name="Mural R.J."/>
            <person name="Adams M.D."/>
            <person name="Myers E.W."/>
            <person name="Smith H.O."/>
            <person name="Venter J.C."/>
        </authorList>
    </citation>
    <scope>NUCLEOTIDE SEQUENCE [LARGE SCALE GENOMIC DNA]</scope>
</reference>
<reference key="4">
    <citation type="journal article" date="2004" name="Genome Res.">
        <title>The status, quality, and expansion of the NIH full-length cDNA project: the Mammalian Gene Collection (MGC).</title>
        <authorList>
            <consortium name="The MGC Project Team"/>
        </authorList>
    </citation>
    <scope>NUCLEOTIDE SEQUENCE [LARGE SCALE MRNA]</scope>
    <source>
        <tissue>Brain</tissue>
    </source>
</reference>
<reference key="5">
    <citation type="journal article" date="2005" name="Genes Dev.">
        <title>The ubiquitin ligase Rnf6 regulates local LIM kinase 1 levels in axonal growth cones.</title>
        <authorList>
            <person name="Tursun B."/>
            <person name="Schlueter A."/>
            <person name="Peters M.A."/>
            <person name="Viehweger B."/>
            <person name="Ostendorff H.P."/>
            <person name="Soosairajah J."/>
            <person name="Drung A."/>
            <person name="Bossenz M."/>
            <person name="Johnsen S.A."/>
            <person name="Schweizer M."/>
            <person name="Bernard O."/>
            <person name="Bach I."/>
        </authorList>
    </citation>
    <scope>FUNCTION</scope>
    <scope>CATALYTIC ACTIVITY</scope>
    <scope>PATHWAY</scope>
    <scope>SUBCELLULAR LOCATION</scope>
    <scope>DEVELOPMENTAL STAGE</scope>
</reference>
<reference key="6">
    <citation type="journal article" date="2007" name="Proc. Natl. Acad. Sci. U.S.A.">
        <title>Large-scale phosphorylation analysis of mouse liver.</title>
        <authorList>
            <person name="Villen J."/>
            <person name="Beausoleil S.A."/>
            <person name="Gerber S.A."/>
            <person name="Gygi S.P."/>
        </authorList>
    </citation>
    <scope>PHOSPHORYLATION [LARGE SCALE ANALYSIS] AT SER-559</scope>
    <scope>IDENTIFICATION BY MASS SPECTROMETRY [LARGE SCALE ANALYSIS]</scope>
    <source>
        <tissue>Liver</tissue>
    </source>
</reference>
<reference key="7">
    <citation type="journal article" date="2010" name="Cell">
        <title>A tissue-specific atlas of mouse protein phosphorylation and expression.</title>
        <authorList>
            <person name="Huttlin E.L."/>
            <person name="Jedrychowski M.P."/>
            <person name="Elias J.E."/>
            <person name="Goswami T."/>
            <person name="Rad R."/>
            <person name="Beausoleil S.A."/>
            <person name="Villen J."/>
            <person name="Haas W."/>
            <person name="Sowa M.E."/>
            <person name="Gygi S.P."/>
        </authorList>
    </citation>
    <scope>PHOSPHORYLATION [LARGE SCALE ANALYSIS] AT SER-559</scope>
    <scope>IDENTIFICATION BY MASS SPECTROMETRY [LARGE SCALE ANALYSIS]</scope>
    <source>
        <tissue>Heart</tissue>
        <tissue>Kidney</tissue>
        <tissue>Lung</tissue>
        <tissue>Spleen</tissue>
    </source>
</reference>
<reference key="8">
    <citation type="journal article" date="2022" name="Cell Biosci.">
        <title>QKI degradation in macrophage by RNF6 protects mice from MRSA infection via enhancing PI3K p110beta dependent autophagy.</title>
        <authorList>
            <person name="Zhai D."/>
            <person name="Wang W."/>
            <person name="Ye Z."/>
            <person name="Xue K."/>
            <person name="Chen G."/>
            <person name="Hu S."/>
            <person name="Yan Z."/>
            <person name="Guo Y."/>
            <person name="Wang F."/>
            <person name="Li X."/>
            <person name="Xiang A."/>
            <person name="Li X."/>
            <person name="Lu Z."/>
            <person name="Wang L."/>
        </authorList>
    </citation>
    <scope>FUNCTION</scope>
    <scope>CATALYTIC ACTIVITY</scope>
</reference>
<evidence type="ECO:0000250" key="1">
    <source>
        <dbReference type="UniProtKB" id="Q9Y252"/>
    </source>
</evidence>
<evidence type="ECO:0000255" key="2">
    <source>
        <dbReference type="PROSITE-ProRule" id="PRU00175"/>
    </source>
</evidence>
<evidence type="ECO:0000256" key="3">
    <source>
        <dbReference type="SAM" id="MobiDB-lite"/>
    </source>
</evidence>
<evidence type="ECO:0000269" key="4">
    <source>
    </source>
</evidence>
<evidence type="ECO:0000269" key="5">
    <source>
    </source>
</evidence>
<evidence type="ECO:0000269" key="6">
    <source>
    </source>
</evidence>
<evidence type="ECO:0000303" key="7">
    <source>
    </source>
</evidence>
<evidence type="ECO:0000305" key="8"/>
<evidence type="ECO:0000312" key="9">
    <source>
        <dbReference type="MGI" id="MGI:1921382"/>
    </source>
</evidence>
<evidence type="ECO:0007744" key="10">
    <source>
    </source>
</evidence>
<evidence type="ECO:0007744" key="11">
    <source>
    </source>
</evidence>
<name>RNF6_MOUSE</name>
<gene>
    <name evidence="7 9" type="primary">Rnf6</name>
</gene>